<accession>Q1JDJ9</accession>
<sequence>MLIIELLKAIFFGIIEGITEWLPVSSTGHLILVQEFIRLNQDKAFIEMFNIVIQLGAIIAVMLIYFERLNPFQPGKTAREVQLTWQLWLKVVIACIPSILIAVPLDNWFEAHFYFMVPIAIALIVYGIAFIWIEKQNAQQEPAVTDLARMSYKTAFFIGCFQVLSIVPGTSRSGATILGAIILGTSRTVAADFTFFLAIPTMFGYSGLKAVKFFLDGHHLDFAQVLILLVASLTAFVVSLLAIRFLTHYVKKHDFTIFGKYRIVLGSLLLIYSFFKFVF</sequence>
<name>UPPP_STRPB</name>
<keyword id="KW-0046">Antibiotic resistance</keyword>
<keyword id="KW-1003">Cell membrane</keyword>
<keyword id="KW-0133">Cell shape</keyword>
<keyword id="KW-0961">Cell wall biogenesis/degradation</keyword>
<keyword id="KW-0378">Hydrolase</keyword>
<keyword id="KW-0472">Membrane</keyword>
<keyword id="KW-0573">Peptidoglycan synthesis</keyword>
<keyword id="KW-0812">Transmembrane</keyword>
<keyword id="KW-1133">Transmembrane helix</keyword>
<protein>
    <recommendedName>
        <fullName evidence="1">Undecaprenyl-diphosphatase</fullName>
        <ecNumber evidence="1">3.6.1.27</ecNumber>
    </recommendedName>
    <alternativeName>
        <fullName evidence="1">Bacitracin resistance protein</fullName>
    </alternativeName>
    <alternativeName>
        <fullName evidence="1">Undecaprenyl pyrophosphate phosphatase</fullName>
    </alternativeName>
</protein>
<reference key="1">
    <citation type="journal article" date="2006" name="Proc. Natl. Acad. Sci. U.S.A.">
        <title>Molecular genetic anatomy of inter- and intraserotype variation in the human bacterial pathogen group A Streptococcus.</title>
        <authorList>
            <person name="Beres S.B."/>
            <person name="Richter E.W."/>
            <person name="Nagiec M.J."/>
            <person name="Sumby P."/>
            <person name="Porcella S.F."/>
            <person name="DeLeo F.R."/>
            <person name="Musser J.M."/>
        </authorList>
    </citation>
    <scope>NUCLEOTIDE SEQUENCE [LARGE SCALE GENOMIC DNA]</scope>
    <source>
        <strain>MGAS2096</strain>
    </source>
</reference>
<comment type="function">
    <text evidence="1">Catalyzes the dephosphorylation of undecaprenyl diphosphate (UPP). Confers resistance to bacitracin.</text>
</comment>
<comment type="catalytic activity">
    <reaction evidence="1">
        <text>di-trans,octa-cis-undecaprenyl diphosphate + H2O = di-trans,octa-cis-undecaprenyl phosphate + phosphate + H(+)</text>
        <dbReference type="Rhea" id="RHEA:28094"/>
        <dbReference type="ChEBI" id="CHEBI:15377"/>
        <dbReference type="ChEBI" id="CHEBI:15378"/>
        <dbReference type="ChEBI" id="CHEBI:43474"/>
        <dbReference type="ChEBI" id="CHEBI:58405"/>
        <dbReference type="ChEBI" id="CHEBI:60392"/>
        <dbReference type="EC" id="3.6.1.27"/>
    </reaction>
</comment>
<comment type="subcellular location">
    <subcellularLocation>
        <location evidence="1">Cell membrane</location>
        <topology evidence="1">Multi-pass membrane protein</topology>
    </subcellularLocation>
</comment>
<comment type="miscellaneous">
    <text>Bacitracin is thought to be involved in the inhibition of peptidoglycan synthesis by sequestering undecaprenyl diphosphate, thereby reducing the pool of lipid carrier available.</text>
</comment>
<comment type="similarity">
    <text evidence="1">Belongs to the UppP family.</text>
</comment>
<evidence type="ECO:0000255" key="1">
    <source>
        <dbReference type="HAMAP-Rule" id="MF_01006"/>
    </source>
</evidence>
<proteinExistence type="inferred from homology"/>
<organism>
    <name type="scientific">Streptococcus pyogenes serotype M12 (strain MGAS2096)</name>
    <dbReference type="NCBI Taxonomy" id="370553"/>
    <lineage>
        <taxon>Bacteria</taxon>
        <taxon>Bacillati</taxon>
        <taxon>Bacillota</taxon>
        <taxon>Bacilli</taxon>
        <taxon>Lactobacillales</taxon>
        <taxon>Streptococcaceae</taxon>
        <taxon>Streptococcus</taxon>
    </lineage>
</organism>
<gene>
    <name evidence="1" type="primary">uppP</name>
    <name type="synonym">bacA</name>
    <name type="ordered locus">MGAS2096_Spy0257</name>
</gene>
<feature type="chain" id="PRO_0000250268" description="Undecaprenyl-diphosphatase">
    <location>
        <begin position="1"/>
        <end position="279"/>
    </location>
</feature>
<feature type="transmembrane region" description="Helical" evidence="1">
    <location>
        <begin position="2"/>
        <end position="22"/>
    </location>
</feature>
<feature type="transmembrane region" description="Helical" evidence="1">
    <location>
        <begin position="44"/>
        <end position="64"/>
    </location>
</feature>
<feature type="transmembrane region" description="Helical" evidence="1">
    <location>
        <begin position="85"/>
        <end position="105"/>
    </location>
</feature>
<feature type="transmembrane region" description="Helical" evidence="1">
    <location>
        <begin position="113"/>
        <end position="133"/>
    </location>
</feature>
<feature type="transmembrane region" description="Helical" evidence="1">
    <location>
        <begin position="163"/>
        <end position="183"/>
    </location>
</feature>
<feature type="transmembrane region" description="Helical" evidence="1">
    <location>
        <begin position="188"/>
        <end position="208"/>
    </location>
</feature>
<feature type="transmembrane region" description="Helical" evidence="1">
    <location>
        <begin position="223"/>
        <end position="243"/>
    </location>
</feature>
<feature type="transmembrane region" description="Helical" evidence="1">
    <location>
        <begin position="255"/>
        <end position="275"/>
    </location>
</feature>
<dbReference type="EC" id="3.6.1.27" evidence="1"/>
<dbReference type="EMBL" id="CP000261">
    <property type="protein sequence ID" value="ABF35309.1"/>
    <property type="molecule type" value="Genomic_DNA"/>
</dbReference>
<dbReference type="SMR" id="Q1JDJ9"/>
<dbReference type="KEGG" id="spj:MGAS2096_Spy0257"/>
<dbReference type="HOGENOM" id="CLU_060296_2_0_9"/>
<dbReference type="GO" id="GO:0005886">
    <property type="term" value="C:plasma membrane"/>
    <property type="evidence" value="ECO:0007669"/>
    <property type="project" value="UniProtKB-SubCell"/>
</dbReference>
<dbReference type="GO" id="GO:0050380">
    <property type="term" value="F:undecaprenyl-diphosphatase activity"/>
    <property type="evidence" value="ECO:0007669"/>
    <property type="project" value="UniProtKB-UniRule"/>
</dbReference>
<dbReference type="GO" id="GO:0071555">
    <property type="term" value="P:cell wall organization"/>
    <property type="evidence" value="ECO:0007669"/>
    <property type="project" value="UniProtKB-KW"/>
</dbReference>
<dbReference type="GO" id="GO:0009252">
    <property type="term" value="P:peptidoglycan biosynthetic process"/>
    <property type="evidence" value="ECO:0007669"/>
    <property type="project" value="UniProtKB-KW"/>
</dbReference>
<dbReference type="GO" id="GO:0008360">
    <property type="term" value="P:regulation of cell shape"/>
    <property type="evidence" value="ECO:0007669"/>
    <property type="project" value="UniProtKB-KW"/>
</dbReference>
<dbReference type="GO" id="GO:0046677">
    <property type="term" value="P:response to antibiotic"/>
    <property type="evidence" value="ECO:0007669"/>
    <property type="project" value="UniProtKB-UniRule"/>
</dbReference>
<dbReference type="HAMAP" id="MF_01006">
    <property type="entry name" value="Undec_diphosphatase"/>
    <property type="match status" value="1"/>
</dbReference>
<dbReference type="InterPro" id="IPR003824">
    <property type="entry name" value="UppP"/>
</dbReference>
<dbReference type="NCBIfam" id="NF001391">
    <property type="entry name" value="PRK00281.1-5"/>
    <property type="match status" value="1"/>
</dbReference>
<dbReference type="PANTHER" id="PTHR30622">
    <property type="entry name" value="UNDECAPRENYL-DIPHOSPHATASE"/>
    <property type="match status" value="1"/>
</dbReference>
<dbReference type="PANTHER" id="PTHR30622:SF3">
    <property type="entry name" value="UNDECAPRENYL-DIPHOSPHATASE"/>
    <property type="match status" value="1"/>
</dbReference>
<dbReference type="Pfam" id="PF02673">
    <property type="entry name" value="BacA"/>
    <property type="match status" value="1"/>
</dbReference>